<proteinExistence type="evidence at protein level"/>
<dbReference type="EMBL" id="AC007109">
    <property type="protein sequence ID" value="AAD25653.1"/>
    <property type="molecule type" value="Genomic_DNA"/>
</dbReference>
<dbReference type="EMBL" id="CP002685">
    <property type="protein sequence ID" value="AEC07023.1"/>
    <property type="molecule type" value="Genomic_DNA"/>
</dbReference>
<dbReference type="EMBL" id="CP002685">
    <property type="protein sequence ID" value="AEC07024.1"/>
    <property type="molecule type" value="Genomic_DNA"/>
</dbReference>
<dbReference type="EMBL" id="AY072378">
    <property type="protein sequence ID" value="AAL62370.1"/>
    <property type="molecule type" value="mRNA"/>
</dbReference>
<dbReference type="EMBL" id="AY114620">
    <property type="protein sequence ID" value="AAM47939.1"/>
    <property type="molecule type" value="mRNA"/>
</dbReference>
<dbReference type="EMBL" id="AY088363">
    <property type="protein sequence ID" value="AAM65902.1"/>
    <property type="molecule type" value="mRNA"/>
</dbReference>
<dbReference type="PIR" id="D84590">
    <property type="entry name" value="D84590"/>
</dbReference>
<dbReference type="RefSeq" id="NP_001077924.1">
    <property type="nucleotide sequence ID" value="NM_001084455.1"/>
</dbReference>
<dbReference type="RefSeq" id="NP_179643.1">
    <property type="nucleotide sequence ID" value="NM_127613.3"/>
</dbReference>
<dbReference type="SMR" id="Q9SIL6"/>
<dbReference type="BioGRID" id="1928">
    <property type="interactions" value="8"/>
</dbReference>
<dbReference type="FunCoup" id="Q9SIL6">
    <property type="interactions" value="3509"/>
</dbReference>
<dbReference type="IntAct" id="Q9SIL6">
    <property type="interactions" value="2"/>
</dbReference>
<dbReference type="STRING" id="3702.Q9SIL6"/>
<dbReference type="PaxDb" id="3702-AT2G20530.2"/>
<dbReference type="ProteomicsDB" id="236746"/>
<dbReference type="EnsemblPlants" id="AT2G20530.1">
    <property type="protein sequence ID" value="AT2G20530.1"/>
    <property type="gene ID" value="AT2G20530"/>
</dbReference>
<dbReference type="EnsemblPlants" id="AT2G20530.2">
    <property type="protein sequence ID" value="AT2G20530.2"/>
    <property type="gene ID" value="AT2G20530"/>
</dbReference>
<dbReference type="GeneID" id="816575"/>
<dbReference type="Gramene" id="AT2G20530.1">
    <property type="protein sequence ID" value="AT2G20530.1"/>
    <property type="gene ID" value="AT2G20530"/>
</dbReference>
<dbReference type="Gramene" id="AT2G20530.2">
    <property type="protein sequence ID" value="AT2G20530.2"/>
    <property type="gene ID" value="AT2G20530"/>
</dbReference>
<dbReference type="KEGG" id="ath:AT2G20530"/>
<dbReference type="Araport" id="AT2G20530"/>
<dbReference type="TAIR" id="AT2G20530">
    <property type="gene designation" value="PHB6"/>
</dbReference>
<dbReference type="eggNOG" id="KOG3090">
    <property type="taxonomic scope" value="Eukaryota"/>
</dbReference>
<dbReference type="HOGENOM" id="CLU_047969_0_2_1"/>
<dbReference type="InParanoid" id="Q9SIL6"/>
<dbReference type="OMA" id="MINMAVR"/>
<dbReference type="OrthoDB" id="275637at2759"/>
<dbReference type="PhylomeDB" id="Q9SIL6"/>
<dbReference type="PRO" id="PR:Q9SIL6"/>
<dbReference type="Proteomes" id="UP000006548">
    <property type="component" value="Chromosome 2"/>
</dbReference>
<dbReference type="ExpressionAtlas" id="Q9SIL6">
    <property type="expression patterns" value="baseline and differential"/>
</dbReference>
<dbReference type="GO" id="GO:0005743">
    <property type="term" value="C:mitochondrial inner membrane"/>
    <property type="evidence" value="ECO:0007669"/>
    <property type="project" value="UniProtKB-SubCell"/>
</dbReference>
<dbReference type="GO" id="GO:0005739">
    <property type="term" value="C:mitochondrion"/>
    <property type="evidence" value="ECO:0000314"/>
    <property type="project" value="TAIR"/>
</dbReference>
<dbReference type="GO" id="GO:0000325">
    <property type="term" value="C:plant-type vacuole"/>
    <property type="evidence" value="ECO:0007005"/>
    <property type="project" value="TAIR"/>
</dbReference>
<dbReference type="CDD" id="cd03401">
    <property type="entry name" value="SPFH_prohibitin"/>
    <property type="match status" value="1"/>
</dbReference>
<dbReference type="FunFam" id="3.30.479.30:FF:000001">
    <property type="entry name" value="Prohibitin 2"/>
    <property type="match status" value="1"/>
</dbReference>
<dbReference type="Gene3D" id="3.30.479.30">
    <property type="entry name" value="Band 7 domain"/>
    <property type="match status" value="1"/>
</dbReference>
<dbReference type="InterPro" id="IPR001107">
    <property type="entry name" value="Band_7"/>
</dbReference>
<dbReference type="InterPro" id="IPR036013">
    <property type="entry name" value="Band_7/SPFH_dom_sf"/>
</dbReference>
<dbReference type="InterPro" id="IPR000163">
    <property type="entry name" value="Prohibitin"/>
</dbReference>
<dbReference type="PANTHER" id="PTHR23222">
    <property type="entry name" value="PROHIBITIN"/>
    <property type="match status" value="1"/>
</dbReference>
<dbReference type="PANTHER" id="PTHR23222:SF1">
    <property type="entry name" value="PROHIBITIN-2"/>
    <property type="match status" value="1"/>
</dbReference>
<dbReference type="Pfam" id="PF01145">
    <property type="entry name" value="Band_7"/>
    <property type="match status" value="1"/>
</dbReference>
<dbReference type="PRINTS" id="PR00679">
    <property type="entry name" value="PROHIBITIN"/>
</dbReference>
<dbReference type="SMART" id="SM00244">
    <property type="entry name" value="PHB"/>
    <property type="match status" value="1"/>
</dbReference>
<dbReference type="SUPFAM" id="SSF117892">
    <property type="entry name" value="Band 7/SPFH domain"/>
    <property type="match status" value="1"/>
</dbReference>
<keyword id="KW-0472">Membrane</keyword>
<keyword id="KW-0496">Mitochondrion</keyword>
<keyword id="KW-0999">Mitochondrion inner membrane</keyword>
<keyword id="KW-1185">Reference proteome</keyword>
<keyword id="KW-0735">Signal-anchor</keyword>
<keyword id="KW-0812">Transmembrane</keyword>
<keyword id="KW-1133">Transmembrane helix</keyword>
<name>PHB6_ARATH</name>
<accession>Q9SIL6</accession>
<protein>
    <recommendedName>
        <fullName>Prohibitin-6, mitochondrial</fullName>
        <shortName>Atphb6</shortName>
    </recommendedName>
</protein>
<feature type="chain" id="PRO_0000420601" description="Prohibitin-6, mitochondrial">
    <location>
        <begin position="1"/>
        <end position="286"/>
    </location>
</feature>
<feature type="topological domain" description="Mitochondrial matrix" evidence="2">
    <location>
        <begin position="1"/>
        <end position="12"/>
    </location>
</feature>
<feature type="transmembrane region" description="Helical; Signal-anchor for type II membrane protein" evidence="2">
    <location>
        <begin position="13"/>
        <end position="35"/>
    </location>
</feature>
<feature type="topological domain" description="Mitochondrial intermembrane" evidence="2">
    <location>
        <begin position="36"/>
        <end position="286"/>
    </location>
</feature>
<reference key="1">
    <citation type="journal article" date="1999" name="Nature">
        <title>Sequence and analysis of chromosome 2 of the plant Arabidopsis thaliana.</title>
        <authorList>
            <person name="Lin X."/>
            <person name="Kaul S."/>
            <person name="Rounsley S.D."/>
            <person name="Shea T.P."/>
            <person name="Benito M.-I."/>
            <person name="Town C.D."/>
            <person name="Fujii C.Y."/>
            <person name="Mason T.M."/>
            <person name="Bowman C.L."/>
            <person name="Barnstead M.E."/>
            <person name="Feldblyum T.V."/>
            <person name="Buell C.R."/>
            <person name="Ketchum K.A."/>
            <person name="Lee J.J."/>
            <person name="Ronning C.M."/>
            <person name="Koo H.L."/>
            <person name="Moffat K.S."/>
            <person name="Cronin L.A."/>
            <person name="Shen M."/>
            <person name="Pai G."/>
            <person name="Van Aken S."/>
            <person name="Umayam L."/>
            <person name="Tallon L.J."/>
            <person name="Gill J.E."/>
            <person name="Adams M.D."/>
            <person name="Carrera A.J."/>
            <person name="Creasy T.H."/>
            <person name="Goodman H.M."/>
            <person name="Somerville C.R."/>
            <person name="Copenhaver G.P."/>
            <person name="Preuss D."/>
            <person name="Nierman W.C."/>
            <person name="White O."/>
            <person name="Eisen J.A."/>
            <person name="Salzberg S.L."/>
            <person name="Fraser C.M."/>
            <person name="Venter J.C."/>
        </authorList>
    </citation>
    <scope>NUCLEOTIDE SEQUENCE [LARGE SCALE GENOMIC DNA]</scope>
    <source>
        <strain>cv. Columbia</strain>
    </source>
</reference>
<reference key="2">
    <citation type="journal article" date="2017" name="Plant J.">
        <title>Araport11: a complete reannotation of the Arabidopsis thaliana reference genome.</title>
        <authorList>
            <person name="Cheng C.Y."/>
            <person name="Krishnakumar V."/>
            <person name="Chan A.P."/>
            <person name="Thibaud-Nissen F."/>
            <person name="Schobel S."/>
            <person name="Town C.D."/>
        </authorList>
    </citation>
    <scope>GENOME REANNOTATION</scope>
    <source>
        <strain>cv. Columbia</strain>
    </source>
</reference>
<reference key="3">
    <citation type="journal article" date="2003" name="Science">
        <title>Empirical analysis of transcriptional activity in the Arabidopsis genome.</title>
        <authorList>
            <person name="Yamada K."/>
            <person name="Lim J."/>
            <person name="Dale J.M."/>
            <person name="Chen H."/>
            <person name="Shinn P."/>
            <person name="Palm C.J."/>
            <person name="Southwick A.M."/>
            <person name="Wu H.C."/>
            <person name="Kim C.J."/>
            <person name="Nguyen M."/>
            <person name="Pham P.K."/>
            <person name="Cheuk R.F."/>
            <person name="Karlin-Newmann G."/>
            <person name="Liu S.X."/>
            <person name="Lam B."/>
            <person name="Sakano H."/>
            <person name="Wu T."/>
            <person name="Yu G."/>
            <person name="Miranda M."/>
            <person name="Quach H.L."/>
            <person name="Tripp M."/>
            <person name="Chang C.H."/>
            <person name="Lee J.M."/>
            <person name="Toriumi M.J."/>
            <person name="Chan M.M."/>
            <person name="Tang C.C."/>
            <person name="Onodera C.S."/>
            <person name="Deng J.M."/>
            <person name="Akiyama K."/>
            <person name="Ansari Y."/>
            <person name="Arakawa T."/>
            <person name="Banh J."/>
            <person name="Banno F."/>
            <person name="Bowser L."/>
            <person name="Brooks S.Y."/>
            <person name="Carninci P."/>
            <person name="Chao Q."/>
            <person name="Choy N."/>
            <person name="Enju A."/>
            <person name="Goldsmith A.D."/>
            <person name="Gurjal M."/>
            <person name="Hansen N.F."/>
            <person name="Hayashizaki Y."/>
            <person name="Johnson-Hopson C."/>
            <person name="Hsuan V.W."/>
            <person name="Iida K."/>
            <person name="Karnes M."/>
            <person name="Khan S."/>
            <person name="Koesema E."/>
            <person name="Ishida J."/>
            <person name="Jiang P.X."/>
            <person name="Jones T."/>
            <person name="Kawai J."/>
            <person name="Kamiya A."/>
            <person name="Meyers C."/>
            <person name="Nakajima M."/>
            <person name="Narusaka M."/>
            <person name="Seki M."/>
            <person name="Sakurai T."/>
            <person name="Satou M."/>
            <person name="Tamse R."/>
            <person name="Vaysberg M."/>
            <person name="Wallender E.K."/>
            <person name="Wong C."/>
            <person name="Yamamura Y."/>
            <person name="Yuan S."/>
            <person name="Shinozaki K."/>
            <person name="Davis R.W."/>
            <person name="Theologis A."/>
            <person name="Ecker J.R."/>
        </authorList>
    </citation>
    <scope>NUCLEOTIDE SEQUENCE [LARGE SCALE MRNA]</scope>
    <source>
        <strain>cv. Columbia</strain>
    </source>
</reference>
<reference key="4">
    <citation type="submission" date="2002-03" db="EMBL/GenBank/DDBJ databases">
        <title>Full-length cDNA from Arabidopsis thaliana.</title>
        <authorList>
            <person name="Brover V.V."/>
            <person name="Troukhan M.E."/>
            <person name="Alexandrov N.A."/>
            <person name="Lu Y.-P."/>
            <person name="Flavell R.B."/>
            <person name="Feldmann K.A."/>
        </authorList>
    </citation>
    <scope>NUCLEOTIDE SEQUENCE [LARGE SCALE MRNA]</scope>
</reference>
<reference key="5">
    <citation type="journal article" date="2003" name="Biochim. Biophys. Acta">
        <title>Mitochondrial complex I from Arabidopsis and rice: orthologs of mammalian and fungal components coupled with plant-specific subunits.</title>
        <authorList>
            <person name="Heazlewood J.L."/>
            <person name="Howell K.A."/>
            <person name="Millar A.H."/>
        </authorList>
    </citation>
    <scope>SUBCELLULAR LOCATION</scope>
    <scope>IDENTIFICATION BY MASS SPECTROMETRY</scope>
    <scope>SUBUNIT</scope>
</reference>
<reference key="6">
    <citation type="journal article" date="2004" name="Plant Cell">
        <title>Experimental analysis of the Arabidopsis mitochondrial proteome highlights signaling and regulatory components, provides assessment of targeting prediction programs, and indicates plant-specific mitochondrial proteins.</title>
        <authorList>
            <person name="Heazlewood J.L."/>
            <person name="Tonti-Filippini J.S."/>
            <person name="Gout A.M."/>
            <person name="Day D.A."/>
            <person name="Whelan J."/>
            <person name="Millar A.H."/>
        </authorList>
    </citation>
    <scope>IDENTIFICATION BY MASS SPECTROMETRY</scope>
    <scope>SUBCELLULAR LOCATION [LARGE SCALE ANALYSIS]</scope>
    <source>
        <strain>cv. Landsberg erecta</strain>
    </source>
</reference>
<reference key="7">
    <citation type="journal article" date="2007" name="Plant J.">
        <title>Mitochondrial type-I prohibitins of Arabidopsis thaliana are required for supporting proficient meristem development.</title>
        <authorList>
            <person name="Van Aken O."/>
            <person name="Pecenkova T."/>
            <person name="van de Cotte B."/>
            <person name="De Rycke R."/>
            <person name="Eeckhout D."/>
            <person name="Fromm H."/>
            <person name="De Jaeger G."/>
            <person name="Witters E."/>
            <person name="Beemster G.T.S."/>
            <person name="Inze D."/>
            <person name="Van Breusegem F."/>
        </authorList>
    </citation>
    <scope>TISSUE SPECIFICITY</scope>
    <scope>SUBUNIT</scope>
    <scope>SUBCELLULAR LOCATION</scope>
    <scope>IDENTIFICATION BY MASS SPECTROMETRY</scope>
    <source>
        <strain>cv. Columbia</strain>
    </source>
</reference>
<reference key="8">
    <citation type="journal article" date="2008" name="J. Proteome Res.">
        <title>Resolving and identifying protein components of plant mitochondrial respiratory complexes using three dimensions of gel electrophoresis.</title>
        <authorList>
            <person name="Meyer E.H."/>
            <person name="Taylor N.L."/>
            <person name="Millar A.H."/>
        </authorList>
    </citation>
    <scope>IDENTIFICATION BY MASS SPECTROMETRY</scope>
    <scope>SUBCELLULAR LOCATION</scope>
    <scope>SUBUNIT</scope>
</reference>
<reference key="9">
    <citation type="journal article" date="2011" name="Plant Physiol.">
        <title>Defining the protein complex proteome of plant mitochondria.</title>
        <authorList>
            <person name="Klodmann J."/>
            <person name="Senkler M."/>
            <person name="Rode C."/>
            <person name="Braun H.-P."/>
        </authorList>
    </citation>
    <scope>IDENTIFICATION BY MASS SPECTROMETRY</scope>
    <scope>SUBCELLULAR LOCATION [LARGE SCALE ANALYSIS]</scope>
</reference>
<comment type="function">
    <text evidence="1">Prohibitin probably acts as a holdase/unfoldase for the stabilization of newly synthesized mitochondrial proteins.</text>
</comment>
<comment type="subunit">
    <text evidence="3 5 6">Component of a prohibitin multimeric complex in mitochondrial membranes.</text>
</comment>
<comment type="subcellular location">
    <subcellularLocation>
        <location evidence="3 4 5 6 7">Mitochondrion inner membrane</location>
        <topology evidence="3 4 5 6 7">Single-pass type II membrane protein</topology>
    </subcellularLocation>
</comment>
<comment type="tissue specificity">
    <text evidence="5">Mostly expressed in proliferative tissues, including vasculature, shoot and root apical tissues.</text>
</comment>
<comment type="similarity">
    <text evidence="8">Belongs to the prohibitin family.</text>
</comment>
<sequence length="286" mass="31637">MNFKNVKVPKGPGGGVIAAVVIGGLSLYGATHTLYNVDGGHRAIVFNRLVGIKDKVYPEGTHLMIPWFERPIIYDVRAKPYLVESTSGSRDLQMVKIGLRVLTRPMADQLPEVYRSLGENYRERVLPSIIHETLKAVVAQYNASQLITQRESVSREIRKILTLRAANFHIALDDVSITGLTFGKEFTAAIEGKQVAAQEAERAKFIVEKAEQDKRSAVIRAEGEAKSAQLIGQAIANNQAFLTLRKIEAAREIAQTISRSANKVYLSSNDLLLNLQAMDLDVKPKK</sequence>
<gene>
    <name type="primary">PHB6</name>
    <name type="ordered locus">At2g20530</name>
    <name type="ORF">T13C7.12</name>
</gene>
<evidence type="ECO:0000250" key="1"/>
<evidence type="ECO:0000255" key="2"/>
<evidence type="ECO:0000269" key="3">
    <source>
    </source>
</evidence>
<evidence type="ECO:0000269" key="4">
    <source>
    </source>
</evidence>
<evidence type="ECO:0000269" key="5">
    <source>
    </source>
</evidence>
<evidence type="ECO:0000269" key="6">
    <source>
    </source>
</evidence>
<evidence type="ECO:0000269" key="7">
    <source>
    </source>
</evidence>
<evidence type="ECO:0000305" key="8"/>
<organism>
    <name type="scientific">Arabidopsis thaliana</name>
    <name type="common">Mouse-ear cress</name>
    <dbReference type="NCBI Taxonomy" id="3702"/>
    <lineage>
        <taxon>Eukaryota</taxon>
        <taxon>Viridiplantae</taxon>
        <taxon>Streptophyta</taxon>
        <taxon>Embryophyta</taxon>
        <taxon>Tracheophyta</taxon>
        <taxon>Spermatophyta</taxon>
        <taxon>Magnoliopsida</taxon>
        <taxon>eudicotyledons</taxon>
        <taxon>Gunneridae</taxon>
        <taxon>Pentapetalae</taxon>
        <taxon>rosids</taxon>
        <taxon>malvids</taxon>
        <taxon>Brassicales</taxon>
        <taxon>Brassicaceae</taxon>
        <taxon>Camelineae</taxon>
        <taxon>Arabidopsis</taxon>
    </lineage>
</organism>